<dbReference type="EMBL" id="Z11560">
    <property type="protein sequence ID" value="CAA77652.1"/>
    <property type="molecule type" value="mRNA"/>
</dbReference>
<dbReference type="EMBL" id="X60149">
    <property type="protein sequence ID" value="CAA42723.1"/>
    <property type="molecule type" value="mRNA"/>
</dbReference>
<dbReference type="PIR" id="JC1113">
    <property type="entry name" value="JC1113"/>
</dbReference>
<dbReference type="RefSeq" id="NP_001009415.1">
    <property type="nucleotide sequence ID" value="NM_001009415.1"/>
</dbReference>
<dbReference type="SMR" id="P26898"/>
<dbReference type="STRING" id="9940.ENSOARP00000013772"/>
<dbReference type="GlyCosmos" id="P26898">
    <property type="glycosylation" value="1 site, No reported glycans"/>
</dbReference>
<dbReference type="PaxDb" id="9940-ENSOARP00000013772"/>
<dbReference type="GeneID" id="443435"/>
<dbReference type="KEGG" id="oas:443435"/>
<dbReference type="CTD" id="3559"/>
<dbReference type="eggNOG" id="ENOG502SUAG">
    <property type="taxonomic scope" value="Eukaryota"/>
</dbReference>
<dbReference type="OrthoDB" id="9833060at2759"/>
<dbReference type="Proteomes" id="UP000002356">
    <property type="component" value="Unplaced"/>
</dbReference>
<dbReference type="GO" id="GO:0016020">
    <property type="term" value="C:membrane"/>
    <property type="evidence" value="ECO:0007669"/>
    <property type="project" value="UniProtKB-SubCell"/>
</dbReference>
<dbReference type="GO" id="GO:0019976">
    <property type="term" value="F:interleukin-2 binding"/>
    <property type="evidence" value="ECO:0007669"/>
    <property type="project" value="InterPro"/>
</dbReference>
<dbReference type="GO" id="GO:0004911">
    <property type="term" value="F:interleukin-2 receptor activity"/>
    <property type="evidence" value="ECO:0007669"/>
    <property type="project" value="Ensembl"/>
</dbReference>
<dbReference type="GO" id="GO:0002376">
    <property type="term" value="P:immune system process"/>
    <property type="evidence" value="ECO:0007669"/>
    <property type="project" value="UniProtKB-KW"/>
</dbReference>
<dbReference type="GO" id="GO:0006954">
    <property type="term" value="P:inflammatory response"/>
    <property type="evidence" value="ECO:0007669"/>
    <property type="project" value="TreeGrafter"/>
</dbReference>
<dbReference type="GO" id="GO:0002664">
    <property type="term" value="P:regulation of T cell tolerance induction"/>
    <property type="evidence" value="ECO:0007669"/>
    <property type="project" value="Ensembl"/>
</dbReference>
<dbReference type="CDD" id="cd00033">
    <property type="entry name" value="CCP"/>
    <property type="match status" value="1"/>
</dbReference>
<dbReference type="FunFam" id="2.20.28.230:FF:000002">
    <property type="entry name" value="Interleukin-2 receptor subunit alpha"/>
    <property type="match status" value="1"/>
</dbReference>
<dbReference type="Gene3D" id="2.20.28.230">
    <property type="match status" value="3"/>
</dbReference>
<dbReference type="InterPro" id="IPR015486">
    <property type="entry name" value="IL-2_rcpt_alpha"/>
</dbReference>
<dbReference type="InterPro" id="IPR035976">
    <property type="entry name" value="Sushi/SCR/CCP_sf"/>
</dbReference>
<dbReference type="InterPro" id="IPR000436">
    <property type="entry name" value="Sushi_SCR_CCP_dom"/>
</dbReference>
<dbReference type="PANTHER" id="PTHR10573">
    <property type="entry name" value="INTERLEUKIN-2 RECEPTOR ALPHA CHAIN"/>
    <property type="match status" value="1"/>
</dbReference>
<dbReference type="PANTHER" id="PTHR10573:SF0">
    <property type="entry name" value="INTERLEUKIN-2 RECEPTOR SUBUNIT ALPHA"/>
    <property type="match status" value="1"/>
</dbReference>
<dbReference type="Pfam" id="PF00084">
    <property type="entry name" value="Sushi"/>
    <property type="match status" value="1"/>
</dbReference>
<dbReference type="SMART" id="SM00032">
    <property type="entry name" value="CCP"/>
    <property type="match status" value="2"/>
</dbReference>
<dbReference type="SUPFAM" id="SSF57535">
    <property type="entry name" value="Complement control module/SCR domain"/>
    <property type="match status" value="2"/>
</dbReference>
<dbReference type="PROSITE" id="PS50923">
    <property type="entry name" value="SUSHI"/>
    <property type="match status" value="2"/>
</dbReference>
<gene>
    <name type="primary">IL2RA</name>
</gene>
<protein>
    <recommendedName>
        <fullName>Interleukin-2 receptor subunit alpha</fullName>
        <shortName>IL-2 receptor subunit alpha</shortName>
        <shortName>IL-2-RA</shortName>
        <shortName>IL-2R subunit alpha</shortName>
        <shortName>IL2-RA</shortName>
    </recommendedName>
    <cdAntigenName>CD25</cdAntigenName>
</protein>
<proteinExistence type="evidence at transcript level"/>
<keyword id="KW-1015">Disulfide bond</keyword>
<keyword id="KW-0325">Glycoprotein</keyword>
<keyword id="KW-0391">Immunity</keyword>
<keyword id="KW-0472">Membrane</keyword>
<keyword id="KW-0675">Receptor</keyword>
<keyword id="KW-1185">Reference proteome</keyword>
<keyword id="KW-0677">Repeat</keyword>
<keyword id="KW-0732">Signal</keyword>
<keyword id="KW-0768">Sushi</keyword>
<keyword id="KW-0812">Transmembrane</keyword>
<keyword id="KW-1133">Transmembrane helix</keyword>
<organism>
    <name type="scientific">Ovis aries</name>
    <name type="common">Sheep</name>
    <dbReference type="NCBI Taxonomy" id="9940"/>
    <lineage>
        <taxon>Eukaryota</taxon>
        <taxon>Metazoa</taxon>
        <taxon>Chordata</taxon>
        <taxon>Craniata</taxon>
        <taxon>Vertebrata</taxon>
        <taxon>Euteleostomi</taxon>
        <taxon>Mammalia</taxon>
        <taxon>Eutheria</taxon>
        <taxon>Laurasiatheria</taxon>
        <taxon>Artiodactyla</taxon>
        <taxon>Ruminantia</taxon>
        <taxon>Pecora</taxon>
        <taxon>Bovidae</taxon>
        <taxon>Caprinae</taxon>
        <taxon>Ovis</taxon>
    </lineage>
</organism>
<reference key="1">
    <citation type="submission" date="1991-12" db="EMBL/GenBank/DDBJ databases">
        <authorList>
            <person name="Verhagen A.A."/>
        </authorList>
    </citation>
    <scope>NUCLEOTIDE SEQUENCE [MRNA]</scope>
    <source>
        <tissue>T-cell</tissue>
    </source>
</reference>
<reference key="2">
    <citation type="journal article" date="1992" name="Gene">
        <title>Cloning of a cDNA encoding the ovine interleukin-2 receptor 55-kDa protein, CD25.</title>
        <authorList>
            <person name="Bujdoso R."/>
            <person name="Sargan D.R."/>
            <person name="Williamson M.L."/>
            <person name="McConnell I."/>
        </authorList>
    </citation>
    <scope>NUCLEOTIDE SEQUENCE [MRNA]</scope>
</reference>
<accession>P26898</accession>
<evidence type="ECO:0000250" key="1"/>
<evidence type="ECO:0000250" key="2">
    <source>
        <dbReference type="UniProtKB" id="P01589"/>
    </source>
</evidence>
<evidence type="ECO:0000255" key="3"/>
<evidence type="ECO:0000255" key="4">
    <source>
        <dbReference type="PROSITE-ProRule" id="PRU00302"/>
    </source>
</evidence>
<evidence type="ECO:0000256" key="5">
    <source>
        <dbReference type="SAM" id="MobiDB-lite"/>
    </source>
</evidence>
<evidence type="ECO:0000305" key="6"/>
<comment type="function">
    <text evidence="2">Receptor for interleukin-2. The receptor is involved in the regulation of immune tolerance by controlling regulatory T cells (TREGs) activity. TREGs suppress the activation and expansion of autoreactive T-cells.</text>
</comment>
<comment type="subunit">
    <text evidence="1">Non-covalent dimer of an alpha and a beta subunit. IL2R exists in 3 different forms: a high affinity dimer, an intermediate affinity monomer (beta subunit), and a low affinity monomer (alpha subunit). The high and intermediate affinity forms also associate with a gamma subunit (By similarity).</text>
</comment>
<comment type="subcellular location">
    <subcellularLocation>
        <location>Membrane</location>
        <topology>Single-pass type I membrane protein</topology>
    </subcellularLocation>
</comment>
<sequence>MEPSLLMWRFFVFIVVPGCVTEACHDDPPSLRNAMFKVLRYEVGTMINCDCKAGFRRVSAVMRCVGDSSHSAWNNRCFCNSTSPAKNPVKPVTPGSEEQRERKPTDAQSQTQPPEQADLPGHCEEPPPWEHEREPLKRVYHFTLGQTVHYQCAQGFRALHTGPAESTCTMIHGEMRWTRPRLKCISEGANSQAPDEAEPPESTEAPPGSGTFLTTRMAGTTDFQKPTDVVATLDTFIFTTEYQIAVAGCILLLSSILLLSCLTWQRRWKKNRRTI</sequence>
<name>IL2RA_SHEEP</name>
<feature type="signal peptide" evidence="1">
    <location>
        <begin position="1"/>
        <end position="21"/>
    </location>
</feature>
<feature type="chain" id="PRO_0000011029" description="Interleukin-2 receptor subunit alpha">
    <location>
        <begin position="22"/>
        <end position="275"/>
    </location>
</feature>
<feature type="topological domain" description="Extracellular" evidence="3">
    <location>
        <begin position="22"/>
        <end position="243"/>
    </location>
</feature>
<feature type="transmembrane region" description="Helical" evidence="3">
    <location>
        <begin position="244"/>
        <end position="262"/>
    </location>
</feature>
<feature type="topological domain" description="Cytoplasmic" evidence="3">
    <location>
        <begin position="263"/>
        <end position="275"/>
    </location>
</feature>
<feature type="domain" description="Sushi 1" evidence="4">
    <location>
        <begin position="22"/>
        <end position="81"/>
    </location>
</feature>
<feature type="domain" description="Sushi 2" evidence="4">
    <location>
        <begin position="121"/>
        <end position="186"/>
    </location>
</feature>
<feature type="region of interest" description="Disordered" evidence="5">
    <location>
        <begin position="86"/>
        <end position="130"/>
    </location>
</feature>
<feature type="region of interest" description="Disordered" evidence="5">
    <location>
        <begin position="188"/>
        <end position="213"/>
    </location>
</feature>
<feature type="compositionally biased region" description="Basic and acidic residues" evidence="5">
    <location>
        <begin position="121"/>
        <end position="130"/>
    </location>
</feature>
<feature type="glycosylation site" description="N-linked (GlcNAc...) asparagine" evidence="3">
    <location>
        <position position="80"/>
    </location>
</feature>
<feature type="disulfide bond" evidence="4">
    <location>
        <begin position="24"/>
        <end position="64"/>
    </location>
</feature>
<feature type="disulfide bond" evidence="4">
    <location>
        <begin position="49"/>
        <end position="77"/>
    </location>
</feature>
<feature type="disulfide bond" evidence="4">
    <location>
        <begin position="51"/>
        <end position="79"/>
    </location>
</feature>
<feature type="disulfide bond" evidence="4">
    <location>
        <begin position="123"/>
        <end position="168"/>
    </location>
</feature>
<feature type="disulfide bond" evidence="4">
    <location>
        <begin position="152"/>
        <end position="184"/>
    </location>
</feature>
<feature type="sequence conflict" description="In Ref. 2; CAA42723." evidence="6" ref="2">
    <original>S</original>
    <variation>T</variation>
    <location>
        <position position="166"/>
    </location>
</feature>